<sequence>MAAERGAGQQQSQEMMEVDRRVESEESGDEEGKKQNSGMVADLSAHSLKDGEERGDEDPEEGQELPVDMETISLDRDAEDVDLNHYRIGKIEGFEVLKKVKTLCLRQNLIKCIENLEGLQSLRELDLYDNQIRRIENLDALTELEVLDISFNLLRNIEGIDKLTRLKKLFLVNNKINKIENISSLHQLQMLELGSNRIRAIENIDTLTNLESLFLGKNKITKLQNLDALTNLTVLSMQSNRLTKIEGLQSLVNLRELYLSHNGIEVIEGLDNNNKLTMLDIASNRIKKIENVSHLTELQEFWMNDNLLDCWSDLDELKGARSLETVYLERNPLQRDPQYRRKIMLALPSVRQIDATFVRF</sequence>
<protein>
    <recommendedName>
        <fullName>Protein phosphatase 1 regulatory subunit 7</fullName>
    </recommendedName>
    <alternativeName>
        <fullName>Protein phosphatase 1 regulatory subunit 22</fullName>
    </alternativeName>
</protein>
<dbReference type="EMBL" id="BC102228">
    <property type="protein sequence ID" value="AAI02229.1"/>
    <property type="molecule type" value="mRNA"/>
</dbReference>
<dbReference type="RefSeq" id="NP_001029410.1">
    <property type="nucleotide sequence ID" value="NM_001034238.2"/>
</dbReference>
<dbReference type="SMR" id="Q3T0W4"/>
<dbReference type="FunCoup" id="Q3T0W4">
    <property type="interactions" value="2730"/>
</dbReference>
<dbReference type="STRING" id="9913.ENSBTAP00000001045"/>
<dbReference type="PaxDb" id="9913-ENSBTAP00000001045"/>
<dbReference type="PeptideAtlas" id="Q3T0W4"/>
<dbReference type="Ensembl" id="ENSBTAT00000001045.3">
    <property type="protein sequence ID" value="ENSBTAP00000001045.2"/>
    <property type="gene ID" value="ENSBTAG00000000789.5"/>
</dbReference>
<dbReference type="GeneID" id="505297"/>
<dbReference type="KEGG" id="bta:505297"/>
<dbReference type="CTD" id="5510"/>
<dbReference type="VEuPathDB" id="HostDB:ENSBTAG00000000789"/>
<dbReference type="VGNC" id="VGNC:52808">
    <property type="gene designation" value="PPP1R7"/>
</dbReference>
<dbReference type="eggNOG" id="KOG0531">
    <property type="taxonomic scope" value="Eukaryota"/>
</dbReference>
<dbReference type="GeneTree" id="ENSGT00940000162473"/>
<dbReference type="HOGENOM" id="CLU_044236_1_1_1"/>
<dbReference type="InParanoid" id="Q3T0W4"/>
<dbReference type="OMA" id="EVWASYN"/>
<dbReference type="OrthoDB" id="7451790at2759"/>
<dbReference type="TreeFam" id="TF105538"/>
<dbReference type="Proteomes" id="UP000009136">
    <property type="component" value="Chromosome 3"/>
</dbReference>
<dbReference type="Bgee" id="ENSBTAG00000000789">
    <property type="expression patterns" value="Expressed in pons and 103 other cell types or tissues"/>
</dbReference>
<dbReference type="GO" id="GO:0005634">
    <property type="term" value="C:nucleus"/>
    <property type="evidence" value="ECO:0007669"/>
    <property type="project" value="UniProtKB-SubCell"/>
</dbReference>
<dbReference type="FunFam" id="3.80.10.10:FF:000055">
    <property type="entry name" value="Protein phosphatase 1 regulatory subunit 7"/>
    <property type="match status" value="1"/>
</dbReference>
<dbReference type="FunFam" id="3.80.10.10:FF:000127">
    <property type="entry name" value="protein phosphatase 1 regulatory subunit 7 isoform X2"/>
    <property type="match status" value="1"/>
</dbReference>
<dbReference type="Gene3D" id="3.80.10.10">
    <property type="entry name" value="Ribonuclease Inhibitor"/>
    <property type="match status" value="2"/>
</dbReference>
<dbReference type="InterPro" id="IPR050576">
    <property type="entry name" value="Cilia_flagella_integrity"/>
</dbReference>
<dbReference type="InterPro" id="IPR001611">
    <property type="entry name" value="Leu-rich_rpt"/>
</dbReference>
<dbReference type="InterPro" id="IPR025875">
    <property type="entry name" value="Leu-rich_rpt_4"/>
</dbReference>
<dbReference type="InterPro" id="IPR003591">
    <property type="entry name" value="Leu-rich_rpt_typical-subtyp"/>
</dbReference>
<dbReference type="InterPro" id="IPR032675">
    <property type="entry name" value="LRR_dom_sf"/>
</dbReference>
<dbReference type="InterPro" id="IPR003603">
    <property type="entry name" value="U2A'_phosphoprotein32A_C"/>
</dbReference>
<dbReference type="PANTHER" id="PTHR45973:SF23">
    <property type="entry name" value="PROTEIN PHOSPHATASE 1 REGULATORY SUBUNIT 7"/>
    <property type="match status" value="1"/>
</dbReference>
<dbReference type="PANTHER" id="PTHR45973">
    <property type="entry name" value="PROTEIN PHOSPHATASE 1 REGULATORY SUBUNIT SDS22-RELATED"/>
    <property type="match status" value="1"/>
</dbReference>
<dbReference type="Pfam" id="PF12799">
    <property type="entry name" value="LRR_4"/>
    <property type="match status" value="3"/>
</dbReference>
<dbReference type="Pfam" id="PF14580">
    <property type="entry name" value="LRR_9"/>
    <property type="match status" value="1"/>
</dbReference>
<dbReference type="SMART" id="SM00365">
    <property type="entry name" value="LRR_SD22"/>
    <property type="match status" value="10"/>
</dbReference>
<dbReference type="SMART" id="SM00369">
    <property type="entry name" value="LRR_TYP"/>
    <property type="match status" value="6"/>
</dbReference>
<dbReference type="SMART" id="SM00446">
    <property type="entry name" value="LRRcap"/>
    <property type="match status" value="1"/>
</dbReference>
<dbReference type="SUPFAM" id="SSF52058">
    <property type="entry name" value="L domain-like"/>
    <property type="match status" value="1"/>
</dbReference>
<dbReference type="PROSITE" id="PS51450">
    <property type="entry name" value="LRR"/>
    <property type="match status" value="11"/>
</dbReference>
<proteinExistence type="evidence at protein level"/>
<reference key="1">
    <citation type="submission" date="2005-08" db="EMBL/GenBank/DDBJ databases">
        <authorList>
            <consortium name="NIH - Mammalian Gene Collection (MGC) project"/>
        </authorList>
    </citation>
    <scope>NUCLEOTIDE SEQUENCE [LARGE SCALE MRNA]</scope>
    <source>
        <strain>Crossbred X Angus</strain>
        <tissue>Ileum</tissue>
    </source>
</reference>
<reference key="2">
    <citation type="journal article" date="2002" name="Biol. Reprod.">
        <title>Sperm PP1gamma2 is regulated by a homologue of the yeast protein phosphatase binding protein sds22.</title>
        <authorList>
            <person name="Huang Z."/>
            <person name="Khatra B."/>
            <person name="Bollen M."/>
            <person name="Carr D.W."/>
            <person name="Vijayaraghavan S."/>
        </authorList>
    </citation>
    <scope>PROTEIN SEQUENCE OF 6-20; 223-241; 322-330 AND 352-359</scope>
    <scope>FUNCTION</scope>
    <scope>INTERACTION WITH PPP1CC ISOFORM 2</scope>
    <scope>TISSUE SPECIFICITY</scope>
</reference>
<reference key="3">
    <citation type="journal article" date="2003" name="Biol. Reprod.">
        <title>Binding and inactivation of the germ cell-specific protein phosphatase PP1gamma2 by sds22 during epididymal sperm maturation.</title>
        <authorList>
            <person name="Mishra S."/>
            <person name="Somanath P.R."/>
            <person name="Huang Z."/>
            <person name="Vijayaraghavan S."/>
        </authorList>
    </citation>
    <scope>FUNCTION</scope>
    <scope>INTERACTION WITH PPP1CC ISOFORM 2</scope>
</reference>
<keyword id="KW-0007">Acetylation</keyword>
<keyword id="KW-0903">Direct protein sequencing</keyword>
<keyword id="KW-0433">Leucine-rich repeat</keyword>
<keyword id="KW-0539">Nucleus</keyword>
<keyword id="KW-0597">Phosphoprotein</keyword>
<keyword id="KW-1185">Reference proteome</keyword>
<keyword id="KW-0677">Repeat</keyword>
<feature type="initiator methionine" description="Removed" evidence="2">
    <location>
        <position position="1"/>
    </location>
</feature>
<feature type="chain" id="PRO_0000239612" description="Protein phosphatase 1 regulatory subunit 7">
    <location>
        <begin position="2"/>
        <end position="360"/>
    </location>
</feature>
<feature type="repeat" description="LRR 1">
    <location>
        <begin position="77"/>
        <end position="98"/>
    </location>
</feature>
<feature type="repeat" description="LRR 2">
    <location>
        <begin position="99"/>
        <end position="120"/>
    </location>
</feature>
<feature type="repeat" description="LRR 3">
    <location>
        <begin position="121"/>
        <end position="142"/>
    </location>
</feature>
<feature type="repeat" description="LRR 4">
    <location>
        <begin position="143"/>
        <end position="164"/>
    </location>
</feature>
<feature type="repeat" description="LRR 5">
    <location>
        <begin position="165"/>
        <end position="186"/>
    </location>
</feature>
<feature type="repeat" description="LRR 6">
    <location>
        <begin position="187"/>
        <end position="208"/>
    </location>
</feature>
<feature type="repeat" description="LRR 7">
    <location>
        <begin position="209"/>
        <end position="230"/>
    </location>
</feature>
<feature type="repeat" description="LRR 8">
    <location>
        <begin position="231"/>
        <end position="252"/>
    </location>
</feature>
<feature type="repeat" description="LRR 9">
    <location>
        <begin position="253"/>
        <end position="274"/>
    </location>
</feature>
<feature type="repeat" description="LRR 10">
    <location>
        <begin position="275"/>
        <end position="296"/>
    </location>
</feature>
<feature type="repeat" description="LRR 11">
    <location>
        <begin position="297"/>
        <end position="318"/>
    </location>
</feature>
<feature type="domain" description="LRRCT">
    <location>
        <begin position="331"/>
        <end position="360"/>
    </location>
</feature>
<feature type="region of interest" description="Disordered" evidence="3">
    <location>
        <begin position="1"/>
        <end position="65"/>
    </location>
</feature>
<feature type="compositionally biased region" description="Basic and acidic residues" evidence="3">
    <location>
        <begin position="17"/>
        <end position="34"/>
    </location>
</feature>
<feature type="compositionally biased region" description="Acidic residues" evidence="3">
    <location>
        <begin position="53"/>
        <end position="63"/>
    </location>
</feature>
<feature type="modified residue" description="N-acetylalanine" evidence="2">
    <location>
        <position position="2"/>
    </location>
</feature>
<feature type="modified residue" description="Phosphoserine" evidence="2">
    <location>
        <position position="12"/>
    </location>
</feature>
<feature type="modified residue" description="Phosphoserine" evidence="2">
    <location>
        <position position="24"/>
    </location>
</feature>
<feature type="modified residue" description="Phosphoserine" evidence="2">
    <location>
        <position position="27"/>
    </location>
</feature>
<feature type="modified residue" description="Phosphoserine" evidence="2">
    <location>
        <position position="44"/>
    </location>
</feature>
<feature type="modified residue" description="Phosphoserine" evidence="2">
    <location>
        <position position="47"/>
    </location>
</feature>
<feature type="modified residue" description="Phosphoserine" evidence="2">
    <location>
        <position position="322"/>
    </location>
</feature>
<accession>Q3T0W4</accession>
<comment type="function">
    <text evidence="4 5">Regulatory subunit of protein phosphatase 1. Inactivates the PPP1CC isoform 2 during epididymal sperm maturation.</text>
</comment>
<comment type="subunit">
    <text evidence="1 4 5">Interacts with PPP1CA, PPP1CB and PPP1CC/PPP1G (By similarity). Interacts with PPP1CC isoform 2 in motile caudal epididymal spermatozoa.</text>
</comment>
<comment type="subcellular location">
    <subcellularLocation>
        <location evidence="1">Nucleus</location>
    </subcellularLocation>
</comment>
<comment type="tissue specificity">
    <text evidence="4">Expressed in epididymal spermatozoa including the principal piece of the flagellum and the head-neck junction.</text>
</comment>
<comment type="similarity">
    <text evidence="6">Belongs to the SDS22 family.</text>
</comment>
<evidence type="ECO:0000250" key="1"/>
<evidence type="ECO:0000250" key="2">
    <source>
        <dbReference type="UniProtKB" id="Q15435"/>
    </source>
</evidence>
<evidence type="ECO:0000256" key="3">
    <source>
        <dbReference type="SAM" id="MobiDB-lite"/>
    </source>
</evidence>
<evidence type="ECO:0000269" key="4">
    <source>
    </source>
</evidence>
<evidence type="ECO:0000269" key="5">
    <source>
    </source>
</evidence>
<evidence type="ECO:0000305" key="6"/>
<name>PP1R7_BOVIN</name>
<organism>
    <name type="scientific">Bos taurus</name>
    <name type="common">Bovine</name>
    <dbReference type="NCBI Taxonomy" id="9913"/>
    <lineage>
        <taxon>Eukaryota</taxon>
        <taxon>Metazoa</taxon>
        <taxon>Chordata</taxon>
        <taxon>Craniata</taxon>
        <taxon>Vertebrata</taxon>
        <taxon>Euteleostomi</taxon>
        <taxon>Mammalia</taxon>
        <taxon>Eutheria</taxon>
        <taxon>Laurasiatheria</taxon>
        <taxon>Artiodactyla</taxon>
        <taxon>Ruminantia</taxon>
        <taxon>Pecora</taxon>
        <taxon>Bovidae</taxon>
        <taxon>Bovinae</taxon>
        <taxon>Bos</taxon>
    </lineage>
</organism>
<gene>
    <name type="primary">PPP1R7</name>
    <name type="synonym">SDS22</name>
</gene>